<feature type="chain" id="PRO_0000456780" description="Myo-inositol transporter 2">
    <location>
        <begin position="1"/>
        <end position="555"/>
    </location>
</feature>
<feature type="topological domain" description="Cytoplasmic" evidence="6">
    <location>
        <begin position="1"/>
        <end position="61"/>
    </location>
</feature>
<feature type="transmembrane region" description="Helical; Name=1" evidence="2">
    <location>
        <begin position="62"/>
        <end position="82"/>
    </location>
</feature>
<feature type="topological domain" description="Extracellular" evidence="6">
    <location>
        <begin position="83"/>
        <end position="108"/>
    </location>
</feature>
<feature type="transmembrane region" description="Helical; Name=2" evidence="2">
    <location>
        <begin position="109"/>
        <end position="129"/>
    </location>
</feature>
<feature type="topological domain" description="Cytoplasmic" evidence="6">
    <location>
        <begin position="130"/>
        <end position="142"/>
    </location>
</feature>
<feature type="transmembrane region" description="Helical; Name=3" evidence="2">
    <location>
        <begin position="143"/>
        <end position="163"/>
    </location>
</feature>
<feature type="topological domain" description="Extracellular" evidence="6">
    <location>
        <begin position="164"/>
        <end position="165"/>
    </location>
</feature>
<feature type="transmembrane region" description="Helical; Name=4" evidence="2">
    <location>
        <begin position="166"/>
        <end position="186"/>
    </location>
</feature>
<feature type="topological domain" description="Cytoplasmic" evidence="6">
    <location>
        <begin position="187"/>
        <end position="200"/>
    </location>
</feature>
<feature type="transmembrane region" description="Helical; Name=5" evidence="2">
    <location>
        <begin position="201"/>
        <end position="221"/>
    </location>
</feature>
<feature type="topological domain" description="Extracellular" evidence="6">
    <location>
        <begin position="222"/>
        <end position="228"/>
    </location>
</feature>
<feature type="transmembrane region" description="Helical; Name=6" evidence="2">
    <location>
        <begin position="229"/>
        <end position="249"/>
    </location>
</feature>
<feature type="topological domain" description="Cytoplasmic" evidence="6">
    <location>
        <begin position="250"/>
        <end position="328"/>
    </location>
</feature>
<feature type="transmembrane region" description="Helical; Name=7" evidence="2">
    <location>
        <begin position="329"/>
        <end position="349"/>
    </location>
</feature>
<feature type="topological domain" description="Extracellular" evidence="6">
    <location>
        <begin position="350"/>
        <end position="355"/>
    </location>
</feature>
<feature type="transmembrane region" description="Helical; Name=8" evidence="2">
    <location>
        <begin position="356"/>
        <end position="376"/>
    </location>
</feature>
<feature type="topological domain" description="Cytoplasmic" evidence="6">
    <location>
        <begin position="377"/>
        <end position="385"/>
    </location>
</feature>
<feature type="transmembrane region" description="Helical; Name=9" evidence="2">
    <location>
        <begin position="386"/>
        <end position="406"/>
    </location>
</feature>
<feature type="topological domain" description="Extracellular" evidence="6">
    <location>
        <begin position="407"/>
        <end position="427"/>
    </location>
</feature>
<feature type="transmembrane region" description="Helical; Name=10" evidence="2">
    <location>
        <begin position="428"/>
        <end position="448"/>
    </location>
</feature>
<feature type="topological domain" description="Cytoplasmic" evidence="6">
    <location>
        <begin position="449"/>
        <end position="461"/>
    </location>
</feature>
<feature type="transmembrane region" description="Helical; Name=11" evidence="2">
    <location>
        <begin position="462"/>
        <end position="482"/>
    </location>
</feature>
<feature type="topological domain" description="Extracellular" evidence="6">
    <location>
        <begin position="483"/>
        <end position="487"/>
    </location>
</feature>
<feature type="transmembrane region" description="Helical; Name=12" evidence="2">
    <location>
        <begin position="488"/>
        <end position="508"/>
    </location>
</feature>
<feature type="topological domain" description="Cytoplasmic" evidence="6">
    <location>
        <begin position="509"/>
        <end position="555"/>
    </location>
</feature>
<dbReference type="EMBL" id="CP003824">
    <property type="protein sequence ID" value="AFR95267.1"/>
    <property type="molecule type" value="Genomic_DNA"/>
</dbReference>
<dbReference type="RefSeq" id="XP_012049154.1">
    <property type="nucleotide sequence ID" value="XM_012193764.1"/>
</dbReference>
<dbReference type="SMR" id="J9VLA6"/>
<dbReference type="GeneID" id="23884638"/>
<dbReference type="KEGG" id="cng:CNAG_00864"/>
<dbReference type="VEuPathDB" id="FungiDB:CNAG_00864"/>
<dbReference type="HOGENOM" id="CLU_001265_30_5_1"/>
<dbReference type="OrthoDB" id="5131at5206"/>
<dbReference type="Proteomes" id="UP000010091">
    <property type="component" value="Chromosome 5"/>
</dbReference>
<dbReference type="GO" id="GO:0005886">
    <property type="term" value="C:plasma membrane"/>
    <property type="evidence" value="ECO:0007669"/>
    <property type="project" value="UniProtKB-SubCell"/>
</dbReference>
<dbReference type="GO" id="GO:0022857">
    <property type="term" value="F:transmembrane transporter activity"/>
    <property type="evidence" value="ECO:0007669"/>
    <property type="project" value="InterPro"/>
</dbReference>
<dbReference type="GO" id="GO:0015798">
    <property type="term" value="P:myo-inositol transport"/>
    <property type="evidence" value="ECO:0007669"/>
    <property type="project" value="UniProtKB-ARBA"/>
</dbReference>
<dbReference type="GO" id="GO:0015791">
    <property type="term" value="P:polyol transmembrane transport"/>
    <property type="evidence" value="ECO:0007669"/>
    <property type="project" value="UniProtKB-ARBA"/>
</dbReference>
<dbReference type="FunFam" id="1.20.1250.20:FF:000073">
    <property type="entry name" value="MFS myo-inositol transporter, putative"/>
    <property type="match status" value="1"/>
</dbReference>
<dbReference type="Gene3D" id="1.20.1250.20">
    <property type="entry name" value="MFS general substrate transporter like domains"/>
    <property type="match status" value="1"/>
</dbReference>
<dbReference type="InterPro" id="IPR020846">
    <property type="entry name" value="MFS_dom"/>
</dbReference>
<dbReference type="InterPro" id="IPR005828">
    <property type="entry name" value="MFS_sugar_transport-like"/>
</dbReference>
<dbReference type="InterPro" id="IPR036259">
    <property type="entry name" value="MFS_trans_sf"/>
</dbReference>
<dbReference type="InterPro" id="IPR050814">
    <property type="entry name" value="Myo-inositol_Transporter"/>
</dbReference>
<dbReference type="InterPro" id="IPR003663">
    <property type="entry name" value="Sugar/inositol_transpt"/>
</dbReference>
<dbReference type="InterPro" id="IPR005829">
    <property type="entry name" value="Sugar_transporter_CS"/>
</dbReference>
<dbReference type="NCBIfam" id="TIGR00879">
    <property type="entry name" value="SP"/>
    <property type="match status" value="1"/>
</dbReference>
<dbReference type="PANTHER" id="PTHR48020">
    <property type="entry name" value="PROTON MYO-INOSITOL COTRANSPORTER"/>
    <property type="match status" value="1"/>
</dbReference>
<dbReference type="PANTHER" id="PTHR48020:SF12">
    <property type="entry name" value="PROTON MYO-INOSITOL COTRANSPORTER"/>
    <property type="match status" value="1"/>
</dbReference>
<dbReference type="Pfam" id="PF00083">
    <property type="entry name" value="Sugar_tr"/>
    <property type="match status" value="1"/>
</dbReference>
<dbReference type="PRINTS" id="PR00171">
    <property type="entry name" value="SUGRTRNSPORT"/>
</dbReference>
<dbReference type="SUPFAM" id="SSF103473">
    <property type="entry name" value="MFS general substrate transporter"/>
    <property type="match status" value="1"/>
</dbReference>
<dbReference type="PROSITE" id="PS50850">
    <property type="entry name" value="MFS"/>
    <property type="match status" value="1"/>
</dbReference>
<dbReference type="PROSITE" id="PS00216">
    <property type="entry name" value="SUGAR_TRANSPORT_1"/>
    <property type="match status" value="1"/>
</dbReference>
<dbReference type="PROSITE" id="PS00217">
    <property type="entry name" value="SUGAR_TRANSPORT_2"/>
    <property type="match status" value="1"/>
</dbReference>
<name>ITR2_CRYNH</name>
<sequence>MSSTLDTITPMPEGGNNQTFVNISKEDLKVETEHYENVAYIANAHDGLIDENLVRAENEDKVTPYFMFLISVAAIAGFLFGYDTGIVGAALPMVGTSLGHTLSATESEIITAGTTIGAIFGASILGTMADKLGRKWAMIISDFAFTAGAIIIAASYSVPQIIVGRLVLGVGVGGAAVIAPLYIAELAPTAVRGRCVGANAFCIPFGQVVASAIGAGFQAGVPYHIGWRVLFGLGVVPSVVQLCLMHFLPESPRVLVLRGKEQEARACLKKIYGNATDDIIDLKLRIVKQYVAATTTMQRDLSFTERAKKYWTHKPYRRAIISVSGVQAFGQLTGFNTLLYYSGTIFGLLGLKNGAAAGLIPSCLNALFVFIGMSIVDKVGRRKLMITFIPGMMIAFTWTIISFHFLTKPTGGLLLKDYQYSTPLVGSVLGSIVLFVIPFGLTYSHIIWYQSEFLPLEIRAAGSAISTTACWLANLVVSVAYLTQLEKLGATGTYGLYLGFITIGYIFVYFCYPETKGLSIDETAEIFIDGFGIEKAHQMLREKRAFAAELYAGRA</sequence>
<evidence type="ECO:0000250" key="1">
    <source>
        <dbReference type="UniProtKB" id="P30605"/>
    </source>
</evidence>
<evidence type="ECO:0000255" key="2"/>
<evidence type="ECO:0000269" key="3">
    <source>
    </source>
</evidence>
<evidence type="ECO:0000269" key="4">
    <source>
    </source>
</evidence>
<evidence type="ECO:0000303" key="5">
    <source>
    </source>
</evidence>
<evidence type="ECO:0000305" key="6"/>
<evidence type="ECO:0000312" key="7">
    <source>
        <dbReference type="EMBL" id="AFR95267.1"/>
    </source>
</evidence>
<evidence type="ECO:0000312" key="8">
    <source>
        <dbReference type="Proteomes" id="UP000010091"/>
    </source>
</evidence>
<keyword id="KW-1003">Cell membrane</keyword>
<keyword id="KW-0472">Membrane</keyword>
<keyword id="KW-0812">Transmembrane</keyword>
<keyword id="KW-1133">Transmembrane helix</keyword>
<keyword id="KW-0813">Transport</keyword>
<proteinExistence type="evidence at transcript level"/>
<comment type="function">
    <text evidence="1">Transporter for myo-inositol.</text>
</comment>
<comment type="catalytic activity">
    <reaction evidence="1">
        <text>myo-inositol(out) + H(+)(out) = myo-inositol(in) + H(+)(in)</text>
        <dbReference type="Rhea" id="RHEA:60364"/>
        <dbReference type="ChEBI" id="CHEBI:15378"/>
        <dbReference type="ChEBI" id="CHEBI:17268"/>
    </reaction>
</comment>
<comment type="subcellular location">
    <subcellularLocation>
        <location evidence="1">Cell membrane</location>
        <topology evidence="2">Multi-pass membrane protein</topology>
    </subcellularLocation>
</comment>
<comment type="induction">
    <text evidence="3 4">Expressed during growth on inositol and during sexual reproduction (PubMed:20689743). Expressed during infection (PubMed:21398509).</text>
</comment>
<comment type="similarity">
    <text evidence="6">Belongs to the major facilitator superfamily. Sugar transporter (TC 2.A.1.1) family.</text>
</comment>
<organism evidence="8">
    <name type="scientific">Cryptococcus neoformans var. grubii serotype A (strain H99 / ATCC 208821 / CBS 10515 / FGSC 9487)</name>
    <name type="common">Filobasidiella neoformans var. grubii</name>
    <dbReference type="NCBI Taxonomy" id="235443"/>
    <lineage>
        <taxon>Eukaryota</taxon>
        <taxon>Fungi</taxon>
        <taxon>Dikarya</taxon>
        <taxon>Basidiomycota</taxon>
        <taxon>Agaricomycotina</taxon>
        <taxon>Tremellomycetes</taxon>
        <taxon>Tremellales</taxon>
        <taxon>Cryptococcaceae</taxon>
        <taxon>Cryptococcus</taxon>
        <taxon>Cryptococcus neoformans species complex</taxon>
    </lineage>
</organism>
<accession>J9VLA6</accession>
<reference evidence="8" key="1">
    <citation type="journal article" date="2014" name="PLoS Genet.">
        <title>Analysis of the genome and transcriptome of Cryptococcus neoformans var. grubii reveals complex RNA expression and microevolution leading to virulence attenuation.</title>
        <authorList>
            <person name="Janbon G."/>
            <person name="Ormerod K.L."/>
            <person name="Paulet D."/>
            <person name="Byrnes E.J. III"/>
            <person name="Yadav V."/>
            <person name="Chatterjee G."/>
            <person name="Mullapudi N."/>
            <person name="Hon C.-C."/>
            <person name="Billmyre R.B."/>
            <person name="Brunel F."/>
            <person name="Bahn Y.-S."/>
            <person name="Chen W."/>
            <person name="Chen Y."/>
            <person name="Chow E.W.L."/>
            <person name="Coppee J.-Y."/>
            <person name="Floyd-Averette A."/>
            <person name="Gaillardin C."/>
            <person name="Gerik K.J."/>
            <person name="Goldberg J."/>
            <person name="Gonzalez-Hilarion S."/>
            <person name="Gujja S."/>
            <person name="Hamlin J.L."/>
            <person name="Hsueh Y.-P."/>
            <person name="Ianiri G."/>
            <person name="Jones S."/>
            <person name="Kodira C.D."/>
            <person name="Kozubowski L."/>
            <person name="Lam W."/>
            <person name="Marra M."/>
            <person name="Mesner L.D."/>
            <person name="Mieczkowski P.A."/>
            <person name="Moyrand F."/>
            <person name="Nielsen K."/>
            <person name="Proux C."/>
            <person name="Rossignol T."/>
            <person name="Schein J.E."/>
            <person name="Sun S."/>
            <person name="Wollschlaeger C."/>
            <person name="Wood I.A."/>
            <person name="Zeng Q."/>
            <person name="Neuveglise C."/>
            <person name="Newlon C.S."/>
            <person name="Perfect J.R."/>
            <person name="Lodge J.K."/>
            <person name="Idnurm A."/>
            <person name="Stajich J.E."/>
            <person name="Kronstad J.W."/>
            <person name="Sanyal K."/>
            <person name="Heitman J."/>
            <person name="Fraser J.A."/>
            <person name="Cuomo C.A."/>
            <person name="Dietrich F.S."/>
        </authorList>
    </citation>
    <scope>NUCLEOTIDE SEQUENCE [LARGE SCALE GENOMIC DNA]</scope>
    <source>
        <strain>H99 / ATCC 208821 / CBS 10515 / FGSC 9487</strain>
    </source>
</reference>
<reference evidence="6" key="2">
    <citation type="journal article" date="2010" name="MBio">
        <title>Role of an expanded inositol transporter repertoire in Cryptococcus neoformans sexual reproduction and virulence.</title>
        <authorList>
            <person name="Xue C."/>
            <person name="Liu T."/>
            <person name="Chen L."/>
            <person name="Li W."/>
            <person name="Liu I."/>
            <person name="Kronstad J.W."/>
            <person name="Seyfang A."/>
            <person name="Heitman J."/>
        </authorList>
    </citation>
    <scope>INDUCTION</scope>
</reference>
<reference evidence="6" key="3">
    <citation type="journal article" date="2011" name="Eukaryot. Cell">
        <title>Two major inositol transporters and their role in cryptococcal virulence.</title>
        <authorList>
            <person name="Wang Y."/>
            <person name="Liu T.B."/>
            <person name="Delmas G."/>
            <person name="Park S."/>
            <person name="Perlin D."/>
            <person name="Xue C."/>
        </authorList>
    </citation>
    <scope>INDUCTION</scope>
</reference>
<protein>
    <recommendedName>
        <fullName evidence="5">Myo-inositol transporter 2</fullName>
    </recommendedName>
</protein>
<gene>
    <name evidence="5" type="primary">ITR2</name>
    <name evidence="7" type="ORF">CNAG_00864</name>
</gene>